<proteinExistence type="evidence at protein level"/>
<sequence>SASGGAGESSGMWFGPRL</sequence>
<dbReference type="GO" id="GO:0005576">
    <property type="term" value="C:extracellular region"/>
    <property type="evidence" value="ECO:0007669"/>
    <property type="project" value="UniProtKB-SubCell"/>
</dbReference>
<dbReference type="GO" id="GO:0005184">
    <property type="term" value="F:neuropeptide hormone activity"/>
    <property type="evidence" value="ECO:0007669"/>
    <property type="project" value="InterPro"/>
</dbReference>
<dbReference type="GO" id="GO:0007218">
    <property type="term" value="P:neuropeptide signaling pathway"/>
    <property type="evidence" value="ECO:0007669"/>
    <property type="project" value="UniProtKB-KW"/>
</dbReference>
<dbReference type="InterPro" id="IPR001484">
    <property type="entry name" value="Pyrokinin_CS"/>
</dbReference>
<dbReference type="PROSITE" id="PS00539">
    <property type="entry name" value="PYROKININ"/>
    <property type="match status" value="1"/>
</dbReference>
<protein>
    <recommendedName>
        <fullName evidence="1">Pyrokinin-5</fullName>
    </recommendedName>
    <alternativeName>
        <fullName evidence="1">FXPRL-amide</fullName>
    </alternativeName>
    <alternativeName>
        <fullName evidence="4">PolAe-Capa-PK</fullName>
    </alternativeName>
</protein>
<keyword id="KW-0027">Amidation</keyword>
<keyword id="KW-0903">Direct protein sequencing</keyword>
<keyword id="KW-0527">Neuropeptide</keyword>
<keyword id="KW-0964">Secreted</keyword>
<reference evidence="5" key="1">
    <citation type="journal article" date="2009" name="BMC Evol. Biol.">
        <title>A proteomic approach for studying insect phylogeny: CAPA peptides of ancient insect taxa (Dictyoptera, Blattoptera) as a test case.</title>
        <authorList>
            <person name="Roth S."/>
            <person name="Fromm B."/>
            <person name="Gaede G."/>
            <person name="Predel R."/>
        </authorList>
    </citation>
    <scope>PROTEIN SEQUENCE</scope>
    <scope>AMIDATION AT LEU-18</scope>
    <source>
        <tissue evidence="3">Abdominal perisympathetic organs</tissue>
    </source>
</reference>
<evidence type="ECO:0000250" key="1">
    <source>
        <dbReference type="UniProtKB" id="P82617"/>
    </source>
</evidence>
<evidence type="ECO:0000255" key="2"/>
<evidence type="ECO:0000269" key="3">
    <source>
    </source>
</evidence>
<evidence type="ECO:0000303" key="4">
    <source>
    </source>
</evidence>
<evidence type="ECO:0000305" key="5"/>
<feature type="peptide" id="PRO_0000378718" description="Pyrokinin-5" evidence="3">
    <location>
        <begin position="1"/>
        <end position="18"/>
    </location>
</feature>
<feature type="modified residue" description="Leucine amide" evidence="3">
    <location>
        <position position="18"/>
    </location>
</feature>
<comment type="function">
    <text evidence="1">Myoactive.</text>
</comment>
<comment type="subcellular location">
    <subcellularLocation>
        <location evidence="5">Secreted</location>
    </subcellularLocation>
</comment>
<comment type="similarity">
    <text evidence="2">Belongs to the pyrokinin family.</text>
</comment>
<organism>
    <name type="scientific">Polyphaga aegyptiaca</name>
    <name type="common">Egyptian desert roach</name>
    <dbReference type="NCBI Taxonomy" id="7085"/>
    <lineage>
        <taxon>Eukaryota</taxon>
        <taxon>Metazoa</taxon>
        <taxon>Ecdysozoa</taxon>
        <taxon>Arthropoda</taxon>
        <taxon>Hexapoda</taxon>
        <taxon>Insecta</taxon>
        <taxon>Pterygota</taxon>
        <taxon>Neoptera</taxon>
        <taxon>Polyneoptera</taxon>
        <taxon>Dictyoptera</taxon>
        <taxon>Blattodea</taxon>
        <taxon>Corydioidea</taxon>
        <taxon>Corydiidae</taxon>
        <taxon>Polyphaga</taxon>
    </lineage>
</organism>
<name>PPK5_POLAY</name>
<accession>P85741</accession>